<sequence length="442" mass="52744">MEDPIKIIHKYKNNNGRIQYHINIFIGDIVDENCMRILRKIKNLDLYTSLTSLETREIDILEKNYGEYWYEKFFNSYHINNTKELTLKNSVRMRELRSLYTEEWVNRHFVNYKKRLETTIFNYEYVVKEDRERRSVKRHIRRQQDDVEELLDYRTTGHPLPPALNDEQYVMSRIESSVETDNWCADNLLEEQLTESELNRELKKLVSKQNLDYSTDKPEDSESEDIELEDSESEDSESEDIDQHGGQGPDDDEFNANFDDPQFDEFDFGNTEDEQNVKLFEMEVEQDLEDVDLLFNDIDETDKNSKLTTREIKEAISNEQYDRIGKKIVDFDESRDNSMFDENLKDVITKTYITNQYLFKDDTIKTIRDKICCGFKNSNKFGENTYIIPSHQYLWSEYTYQGKIDRVMIGQKWIIRNDILKLDVEPNTNTSVKKNSGEIYVF</sequence>
<organismHost>
    <name type="scientific">Acanthamoeba polyphaga</name>
    <name type="common">Amoeba</name>
    <dbReference type="NCBI Taxonomy" id="5757"/>
</organismHost>
<organism>
    <name type="scientific">Acanthamoeba polyphaga mimivirus</name>
    <name type="common">APMV</name>
    <dbReference type="NCBI Taxonomy" id="212035"/>
    <lineage>
        <taxon>Viruses</taxon>
        <taxon>Varidnaviria</taxon>
        <taxon>Bamfordvirae</taxon>
        <taxon>Nucleocytoviricota</taxon>
        <taxon>Megaviricetes</taxon>
        <taxon>Imitervirales</taxon>
        <taxon>Mimiviridae</taxon>
        <taxon>Megamimivirinae</taxon>
        <taxon>Mimivirus</taxon>
        <taxon>Mimivirus bradfordmassiliense</taxon>
    </lineage>
</organism>
<accession>Q5UQR5</accession>
<name>YR326_MIMIV</name>
<gene>
    <name type="ordered locus">MIMI_R326</name>
</gene>
<protein>
    <recommendedName>
        <fullName>Uncharacterized protein R326</fullName>
    </recommendedName>
</protein>
<reference key="1">
    <citation type="journal article" date="2004" name="Science">
        <title>The 1.2-megabase genome sequence of Mimivirus.</title>
        <authorList>
            <person name="Raoult D."/>
            <person name="Audic S."/>
            <person name="Robert C."/>
            <person name="Abergel C."/>
            <person name="Renesto P."/>
            <person name="Ogata H."/>
            <person name="La Scola B."/>
            <person name="Susan M."/>
            <person name="Claverie J.-M."/>
        </authorList>
    </citation>
    <scope>NUCLEOTIDE SEQUENCE [LARGE SCALE GENOMIC DNA]</scope>
    <source>
        <strain>Rowbotham-Bradford</strain>
    </source>
</reference>
<reference key="2">
    <citation type="journal article" date="2006" name="J. Virol.">
        <title>Mimivirus giant particles incorporate a large fraction of anonymous and unique gene products.</title>
        <authorList>
            <person name="Renesto P."/>
            <person name="Abergel C."/>
            <person name="Decloquement P."/>
            <person name="Moinier D."/>
            <person name="Azza S."/>
            <person name="Ogata H."/>
            <person name="Fourquet P."/>
            <person name="Gorvel J.-P."/>
            <person name="Claverie J.-M."/>
            <person name="Raoult D."/>
        </authorList>
    </citation>
    <scope>IDENTIFICATION BY MASS SPECTROMETRY [LARGE SCALE ANALYSIS]</scope>
    <scope>SUBCELLULAR LOCATION</scope>
</reference>
<evidence type="ECO:0000256" key="1">
    <source>
        <dbReference type="SAM" id="MobiDB-lite"/>
    </source>
</evidence>
<evidence type="ECO:0000269" key="2">
    <source>
    </source>
</evidence>
<feature type="chain" id="PRO_0000247393" description="Uncharacterized protein R326">
    <location>
        <begin position="1"/>
        <end position="442"/>
    </location>
</feature>
<feature type="region of interest" description="Disordered" evidence="1">
    <location>
        <begin position="211"/>
        <end position="269"/>
    </location>
</feature>
<feature type="compositionally biased region" description="Acidic residues" evidence="1">
    <location>
        <begin position="221"/>
        <end position="240"/>
    </location>
</feature>
<comment type="subcellular location">
    <subcellularLocation>
        <location evidence="2">Virion</location>
    </subcellularLocation>
</comment>
<keyword id="KW-1185">Reference proteome</keyword>
<keyword id="KW-0946">Virion</keyword>
<proteinExistence type="evidence at protein level"/>
<dbReference type="EMBL" id="AY653733">
    <property type="protein sequence ID" value="AAV50595.1"/>
    <property type="molecule type" value="Genomic_DNA"/>
</dbReference>
<dbReference type="Proteomes" id="UP000001134">
    <property type="component" value="Genome"/>
</dbReference>
<dbReference type="GO" id="GO:0044423">
    <property type="term" value="C:virion component"/>
    <property type="evidence" value="ECO:0007669"/>
    <property type="project" value="UniProtKB-KW"/>
</dbReference>